<feature type="chain" id="PRO_1000187812" description="Ubiquinone/menaquinone biosynthesis C-methyltransferase UbiE">
    <location>
        <begin position="1"/>
        <end position="251"/>
    </location>
</feature>
<feature type="binding site" evidence="1">
    <location>
        <position position="74"/>
    </location>
    <ligand>
        <name>S-adenosyl-L-methionine</name>
        <dbReference type="ChEBI" id="CHEBI:59789"/>
    </ligand>
</feature>
<feature type="binding site" evidence="1">
    <location>
        <position position="95"/>
    </location>
    <ligand>
        <name>S-adenosyl-L-methionine</name>
        <dbReference type="ChEBI" id="CHEBI:59789"/>
    </ligand>
</feature>
<feature type="binding site" evidence="1">
    <location>
        <begin position="123"/>
        <end position="124"/>
    </location>
    <ligand>
        <name>S-adenosyl-L-methionine</name>
        <dbReference type="ChEBI" id="CHEBI:59789"/>
    </ligand>
</feature>
<reference key="1">
    <citation type="journal article" date="2008" name="PLoS ONE">
        <title>Environmental adaptation: genomic analysis of the piezotolerant and psychrotolerant deep-sea iron reducing bacterium Shewanella piezotolerans WP3.</title>
        <authorList>
            <person name="Wang F."/>
            <person name="Wang J."/>
            <person name="Jian H."/>
            <person name="Zhang B."/>
            <person name="Li S."/>
            <person name="Wang F."/>
            <person name="Zeng X."/>
            <person name="Gao L."/>
            <person name="Bartlett D.H."/>
            <person name="Yu J."/>
            <person name="Hu S."/>
            <person name="Xiao X."/>
        </authorList>
    </citation>
    <scope>NUCLEOTIDE SEQUENCE [LARGE SCALE GENOMIC DNA]</scope>
    <source>
        <strain>WP3 / JCM 13877</strain>
    </source>
</reference>
<organism>
    <name type="scientific">Shewanella piezotolerans (strain WP3 / JCM 13877)</name>
    <dbReference type="NCBI Taxonomy" id="225849"/>
    <lineage>
        <taxon>Bacteria</taxon>
        <taxon>Pseudomonadati</taxon>
        <taxon>Pseudomonadota</taxon>
        <taxon>Gammaproteobacteria</taxon>
        <taxon>Alteromonadales</taxon>
        <taxon>Shewanellaceae</taxon>
        <taxon>Shewanella</taxon>
    </lineage>
</organism>
<accession>B8CI06</accession>
<protein>
    <recommendedName>
        <fullName evidence="1">Ubiquinone/menaquinone biosynthesis C-methyltransferase UbiE</fullName>
        <ecNumber evidence="1">2.1.1.163</ecNumber>
        <ecNumber evidence="1">2.1.1.201</ecNumber>
    </recommendedName>
    <alternativeName>
        <fullName evidence="1">2-methoxy-6-polyprenyl-1,4-benzoquinol methylase</fullName>
    </alternativeName>
    <alternativeName>
        <fullName evidence="1">Demethylmenaquinone methyltransferase</fullName>
    </alternativeName>
</protein>
<gene>
    <name evidence="1" type="primary">ubiE</name>
    <name type="ordered locus">swp_0451</name>
</gene>
<dbReference type="EC" id="2.1.1.163" evidence="1"/>
<dbReference type="EC" id="2.1.1.201" evidence="1"/>
<dbReference type="EMBL" id="CP000472">
    <property type="protein sequence ID" value="ACJ27282.1"/>
    <property type="molecule type" value="Genomic_DNA"/>
</dbReference>
<dbReference type="RefSeq" id="WP_020910663.1">
    <property type="nucleotide sequence ID" value="NC_011566.1"/>
</dbReference>
<dbReference type="SMR" id="B8CI06"/>
<dbReference type="STRING" id="225849.swp_0451"/>
<dbReference type="KEGG" id="swp:swp_0451"/>
<dbReference type="eggNOG" id="COG2226">
    <property type="taxonomic scope" value="Bacteria"/>
</dbReference>
<dbReference type="HOGENOM" id="CLU_037990_0_0_6"/>
<dbReference type="OrthoDB" id="9808140at2"/>
<dbReference type="UniPathway" id="UPA00079">
    <property type="reaction ID" value="UER00169"/>
</dbReference>
<dbReference type="UniPathway" id="UPA00232"/>
<dbReference type="Proteomes" id="UP000000753">
    <property type="component" value="Chromosome"/>
</dbReference>
<dbReference type="GO" id="GO:0008425">
    <property type="term" value="F:2-methoxy-6-polyprenyl-1,4-benzoquinol methyltransferase activity"/>
    <property type="evidence" value="ECO:0007669"/>
    <property type="project" value="UniProtKB-UniRule"/>
</dbReference>
<dbReference type="GO" id="GO:0043770">
    <property type="term" value="F:demethylmenaquinone methyltransferase activity"/>
    <property type="evidence" value="ECO:0007669"/>
    <property type="project" value="UniProtKB-UniRule"/>
</dbReference>
<dbReference type="GO" id="GO:0009060">
    <property type="term" value="P:aerobic respiration"/>
    <property type="evidence" value="ECO:0007669"/>
    <property type="project" value="UniProtKB-UniRule"/>
</dbReference>
<dbReference type="GO" id="GO:0009234">
    <property type="term" value="P:menaquinone biosynthetic process"/>
    <property type="evidence" value="ECO:0007669"/>
    <property type="project" value="UniProtKB-UniRule"/>
</dbReference>
<dbReference type="GO" id="GO:0032259">
    <property type="term" value="P:methylation"/>
    <property type="evidence" value="ECO:0007669"/>
    <property type="project" value="UniProtKB-KW"/>
</dbReference>
<dbReference type="CDD" id="cd02440">
    <property type="entry name" value="AdoMet_MTases"/>
    <property type="match status" value="1"/>
</dbReference>
<dbReference type="FunFam" id="3.40.50.150:FF:000014">
    <property type="entry name" value="Ubiquinone/menaquinone biosynthesis C-methyltransferase UbiE"/>
    <property type="match status" value="1"/>
</dbReference>
<dbReference type="Gene3D" id="3.40.50.150">
    <property type="entry name" value="Vaccinia Virus protein VP39"/>
    <property type="match status" value="1"/>
</dbReference>
<dbReference type="HAMAP" id="MF_01813">
    <property type="entry name" value="MenG_UbiE_methyltr"/>
    <property type="match status" value="1"/>
</dbReference>
<dbReference type="InterPro" id="IPR029063">
    <property type="entry name" value="SAM-dependent_MTases_sf"/>
</dbReference>
<dbReference type="InterPro" id="IPR004033">
    <property type="entry name" value="UbiE/COQ5_MeTrFase"/>
</dbReference>
<dbReference type="InterPro" id="IPR023576">
    <property type="entry name" value="UbiE/COQ5_MeTrFase_CS"/>
</dbReference>
<dbReference type="NCBIfam" id="TIGR01934">
    <property type="entry name" value="MenG_MenH_UbiE"/>
    <property type="match status" value="1"/>
</dbReference>
<dbReference type="NCBIfam" id="NF001240">
    <property type="entry name" value="PRK00216.1-1"/>
    <property type="match status" value="1"/>
</dbReference>
<dbReference type="NCBIfam" id="NF001242">
    <property type="entry name" value="PRK00216.1-3"/>
    <property type="match status" value="1"/>
</dbReference>
<dbReference type="NCBIfam" id="NF001244">
    <property type="entry name" value="PRK00216.1-5"/>
    <property type="match status" value="1"/>
</dbReference>
<dbReference type="PANTHER" id="PTHR43591:SF24">
    <property type="entry name" value="2-METHOXY-6-POLYPRENYL-1,4-BENZOQUINOL METHYLASE, MITOCHONDRIAL"/>
    <property type="match status" value="1"/>
</dbReference>
<dbReference type="PANTHER" id="PTHR43591">
    <property type="entry name" value="METHYLTRANSFERASE"/>
    <property type="match status" value="1"/>
</dbReference>
<dbReference type="Pfam" id="PF01209">
    <property type="entry name" value="Ubie_methyltran"/>
    <property type="match status" value="1"/>
</dbReference>
<dbReference type="SUPFAM" id="SSF53335">
    <property type="entry name" value="S-adenosyl-L-methionine-dependent methyltransferases"/>
    <property type="match status" value="1"/>
</dbReference>
<dbReference type="PROSITE" id="PS51608">
    <property type="entry name" value="SAM_MT_UBIE"/>
    <property type="match status" value="1"/>
</dbReference>
<dbReference type="PROSITE" id="PS01183">
    <property type="entry name" value="UBIE_1"/>
    <property type="match status" value="1"/>
</dbReference>
<dbReference type="PROSITE" id="PS01184">
    <property type="entry name" value="UBIE_2"/>
    <property type="match status" value="1"/>
</dbReference>
<comment type="function">
    <text evidence="1">Methyltransferase required for the conversion of demethylmenaquinol (DMKH2) to menaquinol (MKH2) and the conversion of 2-polyprenyl-6-methoxy-1,4-benzoquinol (DDMQH2) to 2-polyprenyl-3-methyl-6-methoxy-1,4-benzoquinol (DMQH2).</text>
</comment>
<comment type="catalytic activity">
    <reaction evidence="1">
        <text>a 2-demethylmenaquinol + S-adenosyl-L-methionine = a menaquinol + S-adenosyl-L-homocysteine + H(+)</text>
        <dbReference type="Rhea" id="RHEA:42640"/>
        <dbReference type="Rhea" id="RHEA-COMP:9539"/>
        <dbReference type="Rhea" id="RHEA-COMP:9563"/>
        <dbReference type="ChEBI" id="CHEBI:15378"/>
        <dbReference type="ChEBI" id="CHEBI:18151"/>
        <dbReference type="ChEBI" id="CHEBI:55437"/>
        <dbReference type="ChEBI" id="CHEBI:57856"/>
        <dbReference type="ChEBI" id="CHEBI:59789"/>
        <dbReference type="EC" id="2.1.1.163"/>
    </reaction>
</comment>
<comment type="catalytic activity">
    <reaction evidence="1">
        <text>a 2-methoxy-6-(all-trans-polyprenyl)benzene-1,4-diol + S-adenosyl-L-methionine = a 5-methoxy-2-methyl-3-(all-trans-polyprenyl)benzene-1,4-diol + S-adenosyl-L-homocysteine + H(+)</text>
        <dbReference type="Rhea" id="RHEA:28286"/>
        <dbReference type="Rhea" id="RHEA-COMP:10858"/>
        <dbReference type="Rhea" id="RHEA-COMP:10859"/>
        <dbReference type="ChEBI" id="CHEBI:15378"/>
        <dbReference type="ChEBI" id="CHEBI:57856"/>
        <dbReference type="ChEBI" id="CHEBI:59789"/>
        <dbReference type="ChEBI" id="CHEBI:84166"/>
        <dbReference type="ChEBI" id="CHEBI:84167"/>
        <dbReference type="EC" id="2.1.1.201"/>
    </reaction>
</comment>
<comment type="pathway">
    <text evidence="1">Quinol/quinone metabolism; menaquinone biosynthesis; menaquinol from 1,4-dihydroxy-2-naphthoate: step 2/2.</text>
</comment>
<comment type="pathway">
    <text evidence="1">Cofactor biosynthesis; ubiquinone biosynthesis.</text>
</comment>
<comment type="similarity">
    <text evidence="1">Belongs to the class I-like SAM-binding methyltransferase superfamily. MenG/UbiE family.</text>
</comment>
<proteinExistence type="inferred from homology"/>
<keyword id="KW-0474">Menaquinone biosynthesis</keyword>
<keyword id="KW-0489">Methyltransferase</keyword>
<keyword id="KW-0949">S-adenosyl-L-methionine</keyword>
<keyword id="KW-0808">Transferase</keyword>
<keyword id="KW-0831">Ubiquinone biosynthesis</keyword>
<sequence>MSEETPKSTHFGYKTVEAEQKADMVAGVFHSVAAKYDIMNDVMSFGIHRMWKRFTIESAGARPGMKVLDLAGGTGDLTAKFSHIVGEKGQVTLADINDSMLKVGREKLRDKGIVGNVNYVQANAEALPFPDNHFDIITIAFGLRNVTDKDAAIASMLRVLKPGGKLLILEFSKPKHDIMRKVYDLYSFKVMPKMGALITQDADSYEYLAESIRMHPDQETLKQMMVDAGFEQVNYTNMTDGIVALHKGYKF</sequence>
<evidence type="ECO:0000255" key="1">
    <source>
        <dbReference type="HAMAP-Rule" id="MF_01813"/>
    </source>
</evidence>
<name>UBIE_SHEPW</name>